<sequence>MDQNLSGLDCLSEPDEKRWPDGKRKRKNSQCMGKSGMSGDSLVSLPSAGYIPSYLDKDEPCVVCSDKATGYHYRCITCEGCKGFFRRTIQKNLHPSYSCKYDGCCIIDKITRNQCQLCRFKKCIAVGMAMDLVLDDSKRVAKRKLIEENRQRRRKEEMIKTLQQRPEPSSEEWELIRIVTEAHRSTNAQGSHWKQRRKFLPEDIGQSPMASMPDGDKVDLEAFSEFTKIITPAITRVVDFAKKLPMFSELTCEDQIILLKGCCMEIMSLRAAVRYDPDSETLTLSGEMAVKREQLKNGGLGVVSDAIFDLGRSLAAFNLDDTEVALLQAVLLMSSDRTGLICTDKIEKCQETYLLAFEHYINHRKHNIPHFWPKLLMKVTDLRMIGACHASRFLHMKVECPTELFPPLFLEVFEDQEV</sequence>
<accession>P15204</accession>
<accession>B7ZR78</accession>
<accession>P18114</accession>
<reference key="1">
    <citation type="journal article" date="1990" name="Proc. Natl. Acad. Sci. U.S.A.">
        <title>Xenopus laevis alpha and beta thyroid hormone receptors.</title>
        <authorList>
            <person name="Yaoita Y."/>
            <person name="Shi Y.-B."/>
            <person name="Brown D.D."/>
        </authorList>
    </citation>
    <scope>NUCLEOTIDE SEQUENCE [MRNA]</scope>
    <scope>FUNCTION</scope>
    <source>
        <tissue>Tadpole</tissue>
    </source>
</reference>
<reference key="2">
    <citation type="journal article" date="1990" name="Proc. Natl. Acad. Sci. U.S.A.">
        <authorList>
            <person name="Yaoita Y."/>
            <person name="Shi Y.-B."/>
            <person name="Brown D.D."/>
        </authorList>
    </citation>
    <scope>ERRATUM OF PUBMED:2402492</scope>
</reference>
<reference key="3">
    <citation type="journal article" date="1989" name="Nucleic Acids Res.">
        <title>Structure and functional expression of a cloned Xenopus thyroid hormone receptor.</title>
        <authorList>
            <person name="Brooks A.R."/>
            <person name="Sweeney G."/>
            <person name="Old R.W."/>
        </authorList>
    </citation>
    <scope>NUCLEOTIDE SEQUENCE [MRNA]</scope>
    <scope>FUNCTION</scope>
    <scope>INHIBITION OF TRIIODOTHYRONINE-BINDING</scope>
    <source>
        <tissue>Oocyte</tissue>
    </source>
</reference>
<reference key="4">
    <citation type="journal article" date="1996" name="J. Biol. Chem.">
        <title>Functional characterization of a mutant thyroid hormone receptor in Xenopus laevis.</title>
        <authorList>
            <person name="Puzianowska-Kuznicka M."/>
            <person name="Wong J."/>
            <person name="Kanamori A."/>
            <person name="Shi Y.-B."/>
        </authorList>
    </citation>
    <scope>NUCLEOTIDE SEQUENCE [MRNA]</scope>
    <scope>SUBUNIT</scope>
    <scope>DEVELOPMENTAL STAGE</scope>
    <scope>MUTAGENESIS OF VAL-133; ASN-149 AND ARG-392</scope>
</reference>
<reference key="5">
    <citation type="submission" date="2008-11" db="EMBL/GenBank/DDBJ databases">
        <authorList>
            <consortium name="NIH - Xenopus Gene Collection (XGC) project"/>
        </authorList>
    </citation>
    <scope>NUCLEOTIDE SEQUENCE [LARGE SCALE MRNA]</scope>
</reference>
<protein>
    <recommendedName>
        <fullName>Thyroid hormone receptor alpha-A</fullName>
        <shortName>TRalphaA</shortName>
        <shortName>XenTR-alpha1</shortName>
    </recommendedName>
    <alternativeName>
        <fullName>Nuclear receptor subfamily 1 group A member 1-A</fullName>
    </alternativeName>
</protein>
<keyword id="KW-0238">DNA-binding</keyword>
<keyword id="KW-0479">Metal-binding</keyword>
<keyword id="KW-0539">Nucleus</keyword>
<keyword id="KW-0675">Receptor</keyword>
<keyword id="KW-1185">Reference proteome</keyword>
<keyword id="KW-0804">Transcription</keyword>
<keyword id="KW-0805">Transcription regulation</keyword>
<keyword id="KW-0862">Zinc</keyword>
<keyword id="KW-0863">Zinc-finger</keyword>
<proteinExistence type="evidence at protein level"/>
<feature type="chain" id="PRO_0000053443" description="Thyroid hormone receptor alpha-A">
    <location>
        <begin position="1"/>
        <end position="418"/>
    </location>
</feature>
<feature type="domain" description="NR LBD" evidence="2">
    <location>
        <begin position="171"/>
        <end position="415"/>
    </location>
</feature>
<feature type="DNA-binding region" description="Nuclear receptor" evidence="1">
    <location>
        <begin position="61"/>
        <end position="135"/>
    </location>
</feature>
<feature type="zinc finger region" description="NR C4-type" evidence="1">
    <location>
        <begin position="61"/>
        <end position="81"/>
    </location>
</feature>
<feature type="zinc finger region" description="NR C4-type" evidence="1">
    <location>
        <begin position="99"/>
        <end position="123"/>
    </location>
</feature>
<feature type="region of interest" description="Modulating">
    <location>
        <begin position="1"/>
        <end position="60"/>
    </location>
</feature>
<feature type="region of interest" description="Disordered" evidence="3">
    <location>
        <begin position="1"/>
        <end position="38"/>
    </location>
</feature>
<feature type="mutagenesis site" description="In TR-alpha V; severe reduction in DNA binding and transcriptional activation." evidence="6">
    <original>V</original>
    <variation>D</variation>
    <location>
        <position position="133"/>
    </location>
</feature>
<feature type="mutagenesis site" description="In TR-alpha VII; abolishes DNA binding and reduces transcriptional activation." evidence="6">
    <original>N</original>
    <variation>D</variation>
    <location>
        <position position="149"/>
    </location>
</feature>
<feature type="mutagenesis site" description="In TR-alpha II; 3-fold reduction in triiodothyronine (T3)-binding activity." evidence="6">
    <original>R</original>
    <variation>C</variation>
    <location>
        <position position="392"/>
    </location>
</feature>
<feature type="sequence conflict" description="In Ref. 3; CAA35252." evidence="7" ref="3">
    <original>Y</original>
    <variation>H</variation>
    <location>
        <position position="54"/>
    </location>
</feature>
<feature type="sequence conflict" description="In Ref. 1; AAA49969." evidence="7" ref="1">
    <original>S</original>
    <variation>G</variation>
    <location>
        <position position="137"/>
    </location>
</feature>
<comment type="function">
    <text evidence="4 5">High affinity receptor for triiodothyronine (T3).</text>
</comment>
<comment type="subunit">
    <text evidence="6">Binds to thyroid hormone receptor element (TRE) weakly as homodimers and monomers, but binds TRE with much higher affinity as heterodimers with retinoid X receptors. Can bind DNA as a heterodimer with either rxra or rxrg.</text>
</comment>
<comment type="subcellular location">
    <subcellularLocation>
        <location>Nucleus</location>
    </subcellularLocation>
</comment>
<comment type="developmental stage">
    <text evidence="6">Expression peaks at the climax of metamorphosis.</text>
</comment>
<comment type="domain">
    <text>Composed of three domains: a modulating N-terminal domain, a DNA-binding domain and a C-terminal ligand-binding domain.</text>
</comment>
<comment type="miscellaneous">
    <text>A number of compounds can compete with and disrupt triiodothyronine (T3)-binding including 3,3',5-triiodothyroacetic acid.</text>
</comment>
<comment type="similarity">
    <text evidence="7">Belongs to the nuclear hormone receptor family. NR1 subfamily.</text>
</comment>
<gene>
    <name type="primary">thra-a</name>
    <name type="synonym">nr1a1-a</name>
    <name type="synonym">thra1</name>
</gene>
<organism>
    <name type="scientific">Xenopus laevis</name>
    <name type="common">African clawed frog</name>
    <dbReference type="NCBI Taxonomy" id="8355"/>
    <lineage>
        <taxon>Eukaryota</taxon>
        <taxon>Metazoa</taxon>
        <taxon>Chordata</taxon>
        <taxon>Craniata</taxon>
        <taxon>Vertebrata</taxon>
        <taxon>Euteleostomi</taxon>
        <taxon>Amphibia</taxon>
        <taxon>Batrachia</taxon>
        <taxon>Anura</taxon>
        <taxon>Pipoidea</taxon>
        <taxon>Pipidae</taxon>
        <taxon>Xenopodinae</taxon>
        <taxon>Xenopus</taxon>
        <taxon>Xenopus</taxon>
    </lineage>
</organism>
<name>THAA_XENLA</name>
<dbReference type="EMBL" id="M35343">
    <property type="protein sequence ID" value="AAA49969.1"/>
    <property type="molecule type" value="mRNA"/>
</dbReference>
<dbReference type="EMBL" id="X17385">
    <property type="protein sequence ID" value="CAA35252.1"/>
    <property type="molecule type" value="mRNA"/>
</dbReference>
<dbReference type="EMBL" id="BC170071">
    <property type="protein sequence ID" value="AAI70071.1"/>
    <property type="molecule type" value="mRNA"/>
</dbReference>
<dbReference type="EMBL" id="BC170077">
    <property type="protein sequence ID" value="AAI70077.1"/>
    <property type="molecule type" value="mRNA"/>
</dbReference>
<dbReference type="PIR" id="S09605">
    <property type="entry name" value="TVXLTA"/>
</dbReference>
<dbReference type="RefSeq" id="NP_001081595.1">
    <property type="nucleotide sequence ID" value="NM_001088126.1"/>
</dbReference>
<dbReference type="SMR" id="P15204"/>
<dbReference type="BioGRID" id="99278">
    <property type="interactions" value="4"/>
</dbReference>
<dbReference type="GeneID" id="397942"/>
<dbReference type="KEGG" id="xla:397942"/>
<dbReference type="AGR" id="Xenbase:XB-GENE-5966552"/>
<dbReference type="CTD" id="397942"/>
<dbReference type="Xenbase" id="XB-GENE-5966552">
    <property type="gene designation" value="thra.L"/>
</dbReference>
<dbReference type="OMA" id="IMCLRIA"/>
<dbReference type="OrthoDB" id="6081310at2759"/>
<dbReference type="Proteomes" id="UP000186698">
    <property type="component" value="Chromosome 9_10L"/>
</dbReference>
<dbReference type="Bgee" id="397942">
    <property type="expression patterns" value="Expressed in blastula and 18 other cell types or tissues"/>
</dbReference>
<dbReference type="GO" id="GO:0005634">
    <property type="term" value="C:nucleus"/>
    <property type="evidence" value="ECO:0000318"/>
    <property type="project" value="GO_Central"/>
</dbReference>
<dbReference type="GO" id="GO:0090575">
    <property type="term" value="C:RNA polymerase II transcription regulator complex"/>
    <property type="evidence" value="ECO:0000318"/>
    <property type="project" value="GO_Central"/>
</dbReference>
<dbReference type="GO" id="GO:0004879">
    <property type="term" value="F:nuclear receptor activity"/>
    <property type="evidence" value="ECO:0000314"/>
    <property type="project" value="UniProtKB"/>
</dbReference>
<dbReference type="GO" id="GO:0046965">
    <property type="term" value="F:nuclear retinoid X receptor binding"/>
    <property type="evidence" value="ECO:0000353"/>
    <property type="project" value="UniProtKB"/>
</dbReference>
<dbReference type="GO" id="GO:0046966">
    <property type="term" value="F:nuclear thyroid hormone receptor binding"/>
    <property type="evidence" value="ECO:0000353"/>
    <property type="project" value="UniProtKB"/>
</dbReference>
<dbReference type="GO" id="GO:0046982">
    <property type="term" value="F:protein heterodimerization activity"/>
    <property type="evidence" value="ECO:0000353"/>
    <property type="project" value="UniProtKB"/>
</dbReference>
<dbReference type="GO" id="GO:0042803">
    <property type="term" value="F:protein homodimerization activity"/>
    <property type="evidence" value="ECO:0000314"/>
    <property type="project" value="UniProtKB"/>
</dbReference>
<dbReference type="GO" id="GO:0000978">
    <property type="term" value="F:RNA polymerase II cis-regulatory region sequence-specific DNA binding"/>
    <property type="evidence" value="ECO:0000318"/>
    <property type="project" value="GO_Central"/>
</dbReference>
<dbReference type="GO" id="GO:0043565">
    <property type="term" value="F:sequence-specific DNA binding"/>
    <property type="evidence" value="ECO:0000314"/>
    <property type="project" value="UniProtKB"/>
</dbReference>
<dbReference type="GO" id="GO:0070324">
    <property type="term" value="F:thyroid hormone binding"/>
    <property type="evidence" value="ECO:0000314"/>
    <property type="project" value="UniProtKB"/>
</dbReference>
<dbReference type="GO" id="GO:0008270">
    <property type="term" value="F:zinc ion binding"/>
    <property type="evidence" value="ECO:0007669"/>
    <property type="project" value="UniProtKB-KW"/>
</dbReference>
<dbReference type="GO" id="GO:0030154">
    <property type="term" value="P:cell differentiation"/>
    <property type="evidence" value="ECO:0000318"/>
    <property type="project" value="GO_Central"/>
</dbReference>
<dbReference type="GO" id="GO:0000122">
    <property type="term" value="P:negative regulation of transcription by RNA polymerase II"/>
    <property type="evidence" value="ECO:0000318"/>
    <property type="project" value="GO_Central"/>
</dbReference>
<dbReference type="GO" id="GO:0045893">
    <property type="term" value="P:positive regulation of DNA-templated transcription"/>
    <property type="evidence" value="ECO:0000314"/>
    <property type="project" value="UniProtKB"/>
</dbReference>
<dbReference type="GO" id="GO:0045944">
    <property type="term" value="P:positive regulation of transcription by RNA polymerase II"/>
    <property type="evidence" value="ECO:0000318"/>
    <property type="project" value="GO_Central"/>
</dbReference>
<dbReference type="GO" id="GO:0012501">
    <property type="term" value="P:programmed cell death"/>
    <property type="evidence" value="ECO:0000315"/>
    <property type="project" value="Xenbase"/>
</dbReference>
<dbReference type="GO" id="GO:0048384">
    <property type="term" value="P:retinoic acid receptor signaling pathway"/>
    <property type="evidence" value="ECO:0000318"/>
    <property type="project" value="GO_Central"/>
</dbReference>
<dbReference type="GO" id="GO:0002154">
    <property type="term" value="P:thyroid hormone receptor signaling pathway"/>
    <property type="evidence" value="ECO:0000318"/>
    <property type="project" value="GO_Central"/>
</dbReference>
<dbReference type="CDD" id="cd06961">
    <property type="entry name" value="NR_DBD_TR"/>
    <property type="match status" value="1"/>
</dbReference>
<dbReference type="CDD" id="cd06935">
    <property type="entry name" value="NR_LBD_TR"/>
    <property type="match status" value="1"/>
</dbReference>
<dbReference type="FunFam" id="1.10.565.10:FF:000006">
    <property type="entry name" value="Thyroid hormone receptor beta 2"/>
    <property type="match status" value="1"/>
</dbReference>
<dbReference type="FunFam" id="3.30.50.10:FF:000011">
    <property type="entry name" value="Thyroid hormone receptor beta isoform"/>
    <property type="match status" value="1"/>
</dbReference>
<dbReference type="Gene3D" id="3.30.50.10">
    <property type="entry name" value="Erythroid Transcription Factor GATA-1, subunit A"/>
    <property type="match status" value="1"/>
</dbReference>
<dbReference type="Gene3D" id="1.10.565.10">
    <property type="entry name" value="Retinoid X Receptor"/>
    <property type="match status" value="1"/>
</dbReference>
<dbReference type="InterPro" id="IPR035500">
    <property type="entry name" value="NHR-like_dom_sf"/>
</dbReference>
<dbReference type="InterPro" id="IPR000536">
    <property type="entry name" value="Nucl_hrmn_rcpt_lig-bd"/>
</dbReference>
<dbReference type="InterPro" id="IPR050234">
    <property type="entry name" value="Nuclear_hormone_rcpt_NR1"/>
</dbReference>
<dbReference type="InterPro" id="IPR001723">
    <property type="entry name" value="Nuclear_hrmn_rcpt"/>
</dbReference>
<dbReference type="InterPro" id="IPR001728">
    <property type="entry name" value="ThyrH_rcpt"/>
</dbReference>
<dbReference type="InterPro" id="IPR001628">
    <property type="entry name" value="Znf_hrmn_rcpt"/>
</dbReference>
<dbReference type="InterPro" id="IPR013088">
    <property type="entry name" value="Znf_NHR/GATA"/>
</dbReference>
<dbReference type="PANTHER" id="PTHR24082">
    <property type="entry name" value="NUCLEAR HORMONE RECEPTOR"/>
    <property type="match status" value="1"/>
</dbReference>
<dbReference type="PANTHER" id="PTHR24082:SF42">
    <property type="entry name" value="THYROID HORMONE RECEPTOR ALPHA"/>
    <property type="match status" value="1"/>
</dbReference>
<dbReference type="Pfam" id="PF00104">
    <property type="entry name" value="Hormone_recep"/>
    <property type="match status" value="1"/>
</dbReference>
<dbReference type="Pfam" id="PF00105">
    <property type="entry name" value="zf-C4"/>
    <property type="match status" value="1"/>
</dbReference>
<dbReference type="PRINTS" id="PR00398">
    <property type="entry name" value="STRDHORMONER"/>
</dbReference>
<dbReference type="PRINTS" id="PR00047">
    <property type="entry name" value="STROIDFINGER"/>
</dbReference>
<dbReference type="PRINTS" id="PR00546">
    <property type="entry name" value="THYROIDHORMR"/>
</dbReference>
<dbReference type="SMART" id="SM00430">
    <property type="entry name" value="HOLI"/>
    <property type="match status" value="1"/>
</dbReference>
<dbReference type="SMART" id="SM00399">
    <property type="entry name" value="ZnF_C4"/>
    <property type="match status" value="1"/>
</dbReference>
<dbReference type="SUPFAM" id="SSF57716">
    <property type="entry name" value="Glucocorticoid receptor-like (DNA-binding domain)"/>
    <property type="match status" value="1"/>
</dbReference>
<dbReference type="SUPFAM" id="SSF48508">
    <property type="entry name" value="Nuclear receptor ligand-binding domain"/>
    <property type="match status" value="1"/>
</dbReference>
<dbReference type="PROSITE" id="PS51843">
    <property type="entry name" value="NR_LBD"/>
    <property type="match status" value="1"/>
</dbReference>
<dbReference type="PROSITE" id="PS00031">
    <property type="entry name" value="NUCLEAR_REC_DBD_1"/>
    <property type="match status" value="1"/>
</dbReference>
<dbReference type="PROSITE" id="PS51030">
    <property type="entry name" value="NUCLEAR_REC_DBD_2"/>
    <property type="match status" value="1"/>
</dbReference>
<evidence type="ECO:0000255" key="1">
    <source>
        <dbReference type="PROSITE-ProRule" id="PRU00407"/>
    </source>
</evidence>
<evidence type="ECO:0000255" key="2">
    <source>
        <dbReference type="PROSITE-ProRule" id="PRU01189"/>
    </source>
</evidence>
<evidence type="ECO:0000256" key="3">
    <source>
        <dbReference type="SAM" id="MobiDB-lite"/>
    </source>
</evidence>
<evidence type="ECO:0000269" key="4">
    <source>
    </source>
</evidence>
<evidence type="ECO:0000269" key="5">
    <source>
    </source>
</evidence>
<evidence type="ECO:0000269" key="6">
    <source>
    </source>
</evidence>
<evidence type="ECO:0000305" key="7"/>